<evidence type="ECO:0000255" key="1">
    <source>
        <dbReference type="HAMAP-Rule" id="MF_00017"/>
    </source>
</evidence>
<feature type="chain" id="PRO_1000089750" description="Recombination protein RecR">
    <location>
        <begin position="1"/>
        <end position="203"/>
    </location>
</feature>
<feature type="domain" description="Toprim" evidence="1">
    <location>
        <begin position="81"/>
        <end position="177"/>
    </location>
</feature>
<feature type="zinc finger region" description="C4-type" evidence="1">
    <location>
        <begin position="58"/>
        <end position="73"/>
    </location>
</feature>
<sequence length="203" mass="22748">MHKDSNIIDELIFSFAQLPGLGNRSARRIVLYLMQDKEVRIKNLNNQLTSVLNNIMECDYCGNLDIVSICNICKHSERDSSTIAVVESVADLWALERSKVFKGWYHVLGKTLSAVSGNDAVNSLKLPKLLNRIREYKVQEIILATNSTIDGQMTAFFVIDYLKDENLKISKLASGIPLGGELDYLDEGTLLAAFKARQSHDLL</sequence>
<name>RECR_ORITI</name>
<proteinExistence type="inferred from homology"/>
<comment type="function">
    <text evidence="1">May play a role in DNA repair. It seems to be involved in an RecBC-independent recombinational process of DNA repair. It may act with RecF and RecO.</text>
</comment>
<comment type="similarity">
    <text evidence="1">Belongs to the RecR family.</text>
</comment>
<organism>
    <name type="scientific">Orientia tsutsugamushi (strain Ikeda)</name>
    <name type="common">Rickettsia tsutsugamushi</name>
    <dbReference type="NCBI Taxonomy" id="334380"/>
    <lineage>
        <taxon>Bacteria</taxon>
        <taxon>Pseudomonadati</taxon>
        <taxon>Pseudomonadota</taxon>
        <taxon>Alphaproteobacteria</taxon>
        <taxon>Rickettsiales</taxon>
        <taxon>Rickettsiaceae</taxon>
        <taxon>Rickettsieae</taxon>
        <taxon>Orientia</taxon>
    </lineage>
</organism>
<reference key="1">
    <citation type="journal article" date="2008" name="DNA Res.">
        <title>The whole-genome sequencing of the obligate intracellular bacterium Orientia tsutsugamushi revealed massive gene amplification during reductive genome evolution.</title>
        <authorList>
            <person name="Nakayama K."/>
            <person name="Yamashita A."/>
            <person name="Kurokawa K."/>
            <person name="Morimoto T."/>
            <person name="Ogawa M."/>
            <person name="Fukuhara M."/>
            <person name="Urakami H."/>
            <person name="Ohnishi M."/>
            <person name="Uchiyama I."/>
            <person name="Ogura Y."/>
            <person name="Ooka T."/>
            <person name="Oshima K."/>
            <person name="Tamura A."/>
            <person name="Hattori M."/>
            <person name="Hayashi T."/>
        </authorList>
    </citation>
    <scope>NUCLEOTIDE SEQUENCE [LARGE SCALE GENOMIC DNA]</scope>
    <source>
        <strain>Ikeda</strain>
    </source>
</reference>
<protein>
    <recommendedName>
        <fullName evidence="1">Recombination protein RecR</fullName>
    </recommendedName>
</protein>
<accession>B3CV64</accession>
<dbReference type="EMBL" id="AP008981">
    <property type="protein sequence ID" value="BAG41261.1"/>
    <property type="molecule type" value="Genomic_DNA"/>
</dbReference>
<dbReference type="RefSeq" id="WP_012462219.1">
    <property type="nucleotide sequence ID" value="NC_010793.1"/>
</dbReference>
<dbReference type="SMR" id="B3CV64"/>
<dbReference type="KEGG" id="ott:OTT_1803"/>
<dbReference type="HOGENOM" id="CLU_060739_1_1_5"/>
<dbReference type="OrthoDB" id="9802672at2"/>
<dbReference type="Proteomes" id="UP000001033">
    <property type="component" value="Chromosome"/>
</dbReference>
<dbReference type="GO" id="GO:0003677">
    <property type="term" value="F:DNA binding"/>
    <property type="evidence" value="ECO:0007669"/>
    <property type="project" value="UniProtKB-UniRule"/>
</dbReference>
<dbReference type="GO" id="GO:0008270">
    <property type="term" value="F:zinc ion binding"/>
    <property type="evidence" value="ECO:0007669"/>
    <property type="project" value="UniProtKB-KW"/>
</dbReference>
<dbReference type="GO" id="GO:0006310">
    <property type="term" value="P:DNA recombination"/>
    <property type="evidence" value="ECO:0007669"/>
    <property type="project" value="UniProtKB-UniRule"/>
</dbReference>
<dbReference type="GO" id="GO:0006281">
    <property type="term" value="P:DNA repair"/>
    <property type="evidence" value="ECO:0007669"/>
    <property type="project" value="UniProtKB-UniRule"/>
</dbReference>
<dbReference type="CDD" id="cd01025">
    <property type="entry name" value="TOPRIM_recR"/>
    <property type="match status" value="1"/>
</dbReference>
<dbReference type="Gene3D" id="3.40.1360.10">
    <property type="match status" value="1"/>
</dbReference>
<dbReference type="Gene3D" id="6.10.250.240">
    <property type="match status" value="1"/>
</dbReference>
<dbReference type="Gene3D" id="1.10.8.420">
    <property type="entry name" value="RecR Domain 1"/>
    <property type="match status" value="1"/>
</dbReference>
<dbReference type="HAMAP" id="MF_00017">
    <property type="entry name" value="RecR"/>
    <property type="match status" value="1"/>
</dbReference>
<dbReference type="InterPro" id="IPR000093">
    <property type="entry name" value="DNA_Rcmb_RecR"/>
</dbReference>
<dbReference type="InterPro" id="IPR023627">
    <property type="entry name" value="Rcmb_RecR"/>
</dbReference>
<dbReference type="InterPro" id="IPR015967">
    <property type="entry name" value="Rcmb_RecR_Znf"/>
</dbReference>
<dbReference type="InterPro" id="IPR006171">
    <property type="entry name" value="TOPRIM_dom"/>
</dbReference>
<dbReference type="InterPro" id="IPR034137">
    <property type="entry name" value="TOPRIM_RecR"/>
</dbReference>
<dbReference type="NCBIfam" id="TIGR00615">
    <property type="entry name" value="recR"/>
    <property type="match status" value="1"/>
</dbReference>
<dbReference type="PANTHER" id="PTHR30446">
    <property type="entry name" value="RECOMBINATION PROTEIN RECR"/>
    <property type="match status" value="1"/>
</dbReference>
<dbReference type="PANTHER" id="PTHR30446:SF0">
    <property type="entry name" value="RECOMBINATION PROTEIN RECR"/>
    <property type="match status" value="1"/>
</dbReference>
<dbReference type="Pfam" id="PF21175">
    <property type="entry name" value="RecR_C"/>
    <property type="match status" value="1"/>
</dbReference>
<dbReference type="Pfam" id="PF21176">
    <property type="entry name" value="RecR_HhH"/>
    <property type="match status" value="1"/>
</dbReference>
<dbReference type="Pfam" id="PF13662">
    <property type="entry name" value="Toprim_4"/>
    <property type="match status" value="1"/>
</dbReference>
<dbReference type="SMART" id="SM00493">
    <property type="entry name" value="TOPRIM"/>
    <property type="match status" value="1"/>
</dbReference>
<dbReference type="SUPFAM" id="SSF111304">
    <property type="entry name" value="Recombination protein RecR"/>
    <property type="match status" value="1"/>
</dbReference>
<dbReference type="PROSITE" id="PS01300">
    <property type="entry name" value="RECR"/>
    <property type="match status" value="1"/>
</dbReference>
<dbReference type="PROSITE" id="PS50880">
    <property type="entry name" value="TOPRIM"/>
    <property type="match status" value="1"/>
</dbReference>
<keyword id="KW-0227">DNA damage</keyword>
<keyword id="KW-0233">DNA recombination</keyword>
<keyword id="KW-0234">DNA repair</keyword>
<keyword id="KW-0479">Metal-binding</keyword>
<keyword id="KW-0862">Zinc</keyword>
<keyword id="KW-0863">Zinc-finger</keyword>
<gene>
    <name evidence="1" type="primary">recR</name>
    <name type="ordered locus">OTT_1803</name>
</gene>